<reference key="1">
    <citation type="journal article" date="2008" name="J. Bacteriol.">
        <title>Genome sequence of the streptomycin-producing microorganism Streptomyces griseus IFO 13350.</title>
        <authorList>
            <person name="Ohnishi Y."/>
            <person name="Ishikawa J."/>
            <person name="Hara H."/>
            <person name="Suzuki H."/>
            <person name="Ikenoya M."/>
            <person name="Ikeda H."/>
            <person name="Yamashita A."/>
            <person name="Hattori M."/>
            <person name="Horinouchi S."/>
        </authorList>
    </citation>
    <scope>NUCLEOTIDE SEQUENCE [LARGE SCALE GENOMIC DNA]</scope>
    <source>
        <strain>JCM 4626 / CBS 651.72 / NBRC 13350 / KCC S-0626 / ISP 5235</strain>
    </source>
</reference>
<dbReference type="EC" id="1.2.1.41" evidence="1"/>
<dbReference type="EMBL" id="AP009493">
    <property type="protein sequence ID" value="BAG21791.1"/>
    <property type="molecule type" value="Genomic_DNA"/>
</dbReference>
<dbReference type="RefSeq" id="WP_012380997.1">
    <property type="nucleotide sequence ID" value="NC_010572.1"/>
</dbReference>
<dbReference type="SMR" id="B1VXE5"/>
<dbReference type="KEGG" id="sgr:SGR_4962"/>
<dbReference type="PATRIC" id="fig|455632.4.peg.5073"/>
<dbReference type="eggNOG" id="COG0014">
    <property type="taxonomic scope" value="Bacteria"/>
</dbReference>
<dbReference type="HOGENOM" id="CLU_030231_0_0_11"/>
<dbReference type="UniPathway" id="UPA00098">
    <property type="reaction ID" value="UER00360"/>
</dbReference>
<dbReference type="Proteomes" id="UP000001685">
    <property type="component" value="Chromosome"/>
</dbReference>
<dbReference type="GO" id="GO:0005737">
    <property type="term" value="C:cytoplasm"/>
    <property type="evidence" value="ECO:0007669"/>
    <property type="project" value="UniProtKB-SubCell"/>
</dbReference>
<dbReference type="GO" id="GO:0004350">
    <property type="term" value="F:glutamate-5-semialdehyde dehydrogenase activity"/>
    <property type="evidence" value="ECO:0007669"/>
    <property type="project" value="UniProtKB-UniRule"/>
</dbReference>
<dbReference type="GO" id="GO:0050661">
    <property type="term" value="F:NADP binding"/>
    <property type="evidence" value="ECO:0007669"/>
    <property type="project" value="InterPro"/>
</dbReference>
<dbReference type="GO" id="GO:0055129">
    <property type="term" value="P:L-proline biosynthetic process"/>
    <property type="evidence" value="ECO:0007669"/>
    <property type="project" value="UniProtKB-UniRule"/>
</dbReference>
<dbReference type="CDD" id="cd07079">
    <property type="entry name" value="ALDH_F18-19_ProA-GPR"/>
    <property type="match status" value="1"/>
</dbReference>
<dbReference type="FunFam" id="3.40.309.10:FF:000006">
    <property type="entry name" value="Gamma-glutamyl phosphate reductase"/>
    <property type="match status" value="1"/>
</dbReference>
<dbReference type="Gene3D" id="3.40.605.10">
    <property type="entry name" value="Aldehyde Dehydrogenase, Chain A, domain 1"/>
    <property type="match status" value="1"/>
</dbReference>
<dbReference type="Gene3D" id="3.40.309.10">
    <property type="entry name" value="Aldehyde Dehydrogenase, Chain A, domain 2"/>
    <property type="match status" value="1"/>
</dbReference>
<dbReference type="HAMAP" id="MF_00412">
    <property type="entry name" value="ProA"/>
    <property type="match status" value="1"/>
</dbReference>
<dbReference type="InterPro" id="IPR016161">
    <property type="entry name" value="Ald_DH/histidinol_DH"/>
</dbReference>
<dbReference type="InterPro" id="IPR016163">
    <property type="entry name" value="Ald_DH_C"/>
</dbReference>
<dbReference type="InterPro" id="IPR016162">
    <property type="entry name" value="Ald_DH_N"/>
</dbReference>
<dbReference type="InterPro" id="IPR015590">
    <property type="entry name" value="Aldehyde_DH_dom"/>
</dbReference>
<dbReference type="InterPro" id="IPR020593">
    <property type="entry name" value="G-glutamylP_reductase_CS"/>
</dbReference>
<dbReference type="InterPro" id="IPR012134">
    <property type="entry name" value="Glu-5-SA_DH"/>
</dbReference>
<dbReference type="InterPro" id="IPR000965">
    <property type="entry name" value="GPR_dom"/>
</dbReference>
<dbReference type="NCBIfam" id="NF001221">
    <property type="entry name" value="PRK00197.1"/>
    <property type="match status" value="1"/>
</dbReference>
<dbReference type="NCBIfam" id="TIGR00407">
    <property type="entry name" value="proA"/>
    <property type="match status" value="1"/>
</dbReference>
<dbReference type="PANTHER" id="PTHR11063:SF8">
    <property type="entry name" value="DELTA-1-PYRROLINE-5-CARBOXYLATE SYNTHASE"/>
    <property type="match status" value="1"/>
</dbReference>
<dbReference type="PANTHER" id="PTHR11063">
    <property type="entry name" value="GLUTAMATE SEMIALDEHYDE DEHYDROGENASE"/>
    <property type="match status" value="1"/>
</dbReference>
<dbReference type="Pfam" id="PF00171">
    <property type="entry name" value="Aldedh"/>
    <property type="match status" value="1"/>
</dbReference>
<dbReference type="PIRSF" id="PIRSF000151">
    <property type="entry name" value="GPR"/>
    <property type="match status" value="1"/>
</dbReference>
<dbReference type="SUPFAM" id="SSF53720">
    <property type="entry name" value="ALDH-like"/>
    <property type="match status" value="1"/>
</dbReference>
<dbReference type="PROSITE" id="PS01223">
    <property type="entry name" value="PROA"/>
    <property type="match status" value="1"/>
</dbReference>
<feature type="chain" id="PRO_1000193666" description="Gamma-glutamyl phosphate reductase">
    <location>
        <begin position="1"/>
        <end position="427"/>
    </location>
</feature>
<organism>
    <name type="scientific">Streptomyces griseus subsp. griseus (strain JCM 4626 / CBS 651.72 / NBRC 13350 / KCC S-0626 / ISP 5235)</name>
    <dbReference type="NCBI Taxonomy" id="455632"/>
    <lineage>
        <taxon>Bacteria</taxon>
        <taxon>Bacillati</taxon>
        <taxon>Actinomycetota</taxon>
        <taxon>Actinomycetes</taxon>
        <taxon>Kitasatosporales</taxon>
        <taxon>Streptomycetaceae</taxon>
        <taxon>Streptomyces</taxon>
    </lineage>
</organism>
<comment type="function">
    <text evidence="1">Catalyzes the NADPH-dependent reduction of L-glutamate 5-phosphate into L-glutamate 5-semialdehyde and phosphate. The product spontaneously undergoes cyclization to form 1-pyrroline-5-carboxylate.</text>
</comment>
<comment type="catalytic activity">
    <reaction evidence="1">
        <text>L-glutamate 5-semialdehyde + phosphate + NADP(+) = L-glutamyl 5-phosphate + NADPH + H(+)</text>
        <dbReference type="Rhea" id="RHEA:19541"/>
        <dbReference type="ChEBI" id="CHEBI:15378"/>
        <dbReference type="ChEBI" id="CHEBI:43474"/>
        <dbReference type="ChEBI" id="CHEBI:57783"/>
        <dbReference type="ChEBI" id="CHEBI:58066"/>
        <dbReference type="ChEBI" id="CHEBI:58274"/>
        <dbReference type="ChEBI" id="CHEBI:58349"/>
        <dbReference type="EC" id="1.2.1.41"/>
    </reaction>
</comment>
<comment type="pathway">
    <text evidence="1">Amino-acid biosynthesis; L-proline biosynthesis; L-glutamate 5-semialdehyde from L-glutamate: step 2/2.</text>
</comment>
<comment type="subcellular location">
    <subcellularLocation>
        <location evidence="1">Cytoplasm</location>
    </subcellularLocation>
</comment>
<comment type="similarity">
    <text evidence="1">Belongs to the gamma-glutamyl phosphate reductase family.</text>
</comment>
<evidence type="ECO:0000255" key="1">
    <source>
        <dbReference type="HAMAP-Rule" id="MF_00412"/>
    </source>
</evidence>
<sequence>MTTLSPYDNLSPVAQTAYRARAAAADIAPLPRAAKDDALLAIADALEVRTSEIVEANAEDVERAREAGTSEGIIDRLTLTPERIRAIAADVRDVAALPDPVGEVVRGSTLPNGIDLRQVRVPLGVVGIIYEARPNVTVDAAALCLKSGNAVLLRGSSSAYASNTALVRVLRDAVGGSGLPADAVQLVPGESRDSVRELMRARGLVDVLIPRGGASLIRTVVEESTVPVIETGTGNCHVYVDAQTDLAMAVDILINSKAQRPSVCNAAETLLVHKDVADAFLPLALDALADAGVTVHGDEHVLARAEGSKATVVPATTEDWETEYLSYDIAAAVVDSLDAAVAHIRLWSSGHTEAIVTTSQAAARRFTQLVDSTTVAVNASTRFTDGGQFGFGAEIGISTQKLHARGPMGLPELTSTKYIVTGDGHTR</sequence>
<name>PROA_STRGG</name>
<protein>
    <recommendedName>
        <fullName evidence="1">Gamma-glutamyl phosphate reductase</fullName>
        <shortName evidence="1">GPR</shortName>
        <ecNumber evidence="1">1.2.1.41</ecNumber>
    </recommendedName>
    <alternativeName>
        <fullName evidence="1">Glutamate-5-semialdehyde dehydrogenase</fullName>
    </alternativeName>
    <alternativeName>
        <fullName evidence="1">Glutamyl-gamma-semialdehyde dehydrogenase</fullName>
        <shortName evidence="1">GSA dehydrogenase</shortName>
    </alternativeName>
</protein>
<gene>
    <name evidence="1" type="primary">proA</name>
    <name type="ordered locus">SGR_4962</name>
</gene>
<proteinExistence type="inferred from homology"/>
<keyword id="KW-0028">Amino-acid biosynthesis</keyword>
<keyword id="KW-0963">Cytoplasm</keyword>
<keyword id="KW-0521">NADP</keyword>
<keyword id="KW-0560">Oxidoreductase</keyword>
<keyword id="KW-0641">Proline biosynthesis</keyword>
<accession>B1VXE5</accession>